<keyword id="KW-0378">Hydrolase</keyword>
<keyword id="KW-0460">Magnesium</keyword>
<keyword id="KW-0511">Multifunctional enzyme</keyword>
<keyword id="KW-0548">Nucleotidyltransferase</keyword>
<keyword id="KW-0677">Repeat</keyword>
<keyword id="KW-0808">Transferase</keyword>
<reference key="1">
    <citation type="submission" date="2007-05" db="EMBL/GenBank/DDBJ databases">
        <title>Complete sequence of chromosome of Psychrobacter sp. PRwf-1.</title>
        <authorList>
            <consortium name="US DOE Joint Genome Institute"/>
            <person name="Copeland A."/>
            <person name="Lucas S."/>
            <person name="Lapidus A."/>
            <person name="Barry K."/>
            <person name="Detter J.C."/>
            <person name="Glavina del Rio T."/>
            <person name="Hammon N."/>
            <person name="Israni S."/>
            <person name="Dalin E."/>
            <person name="Tice H."/>
            <person name="Pitluck S."/>
            <person name="Chain P."/>
            <person name="Malfatti S."/>
            <person name="Shin M."/>
            <person name="Vergez L."/>
            <person name="Schmutz J."/>
            <person name="Larimer F."/>
            <person name="Land M."/>
            <person name="Hauser L."/>
            <person name="Kyrpides N."/>
            <person name="Kim E."/>
            <person name="Tiedje J."/>
            <person name="Richardson P."/>
        </authorList>
    </citation>
    <scope>NUCLEOTIDE SEQUENCE [LARGE SCALE GENOMIC DNA]</scope>
    <source>
        <strain>PRwf-1</strain>
    </source>
</reference>
<sequence length="899" mass="103339">MFISDPTDSLITPLPDLTAHSEAQSRNLGIPDWLKQIEADIATALEKGVDIRHLVEARAASIDSLLIELFKLHELTQTDLALFAVGGYGRGELSPYSDVDILILSPDTLSAEISQKVDGFVARLWDVGIEPGIAVRTIEDCLQVATDITVATNLLEARLLIGNDSLSAIPNNVVQQTWSQKEFYDAKMAEARARHLLHNGTEYNLEPDIKKSPGGLRDIHTIGWITKRYFRITKLYDLVPQDFLTEKEFDELMFAEGFLWRIRHHLHHLTGRNENKLLFDYQRDIAERMGYEQSEEDEPNAAVENFMRDYYRCAMQISTLSEMLTSHYYETLIEARLPESERPEKSVLNARFNRVGDHIAIAHHHVFAQHPEAILEMFLLMGQHGIKHIRTRTLRALKIAARGIDQHYRDNPLHKKLFLDNLKEQNYLFHRLRIMKRYGVLANYMPQFVNLIGLMQYDLFHRYTVDAHILLLIRMLHRFTSPKYQDDFALVGSIYKRIERKEIIVLAAIFHDIAKGRGGDHSELGERDAIEFCLSHGMSEADAKLIGWLTRYHLLMSMTAQKQDISDPEVVTKFANLVGNVTHLNHLYVLTVADMNATNPQLWNSWRASLMKQLYTQTRRILRADLDAPTNRQEMIATTRQQALTMLDKVDNQHMNREEVLALWDELGDEYFLREIPEAIMWHTEAILNHPPIGRASDANSEPLIVLREHRELALDAVQIFIYTQDQANLFAVTMAVFDQMNLDVLDARIITATRDFALDSYVLLDRHGTLLTDPESREELTRRLIDAFKNPETPKLVQKRLPRRLKNFQVPTTIDFNYNEASRQHVMSLTTLDQPGLLARIGQVFLNEGIEVHAARITTLGERAEDMFYISDIGDNMLSDAKLERLRTTLIDVLTPSC</sequence>
<organism>
    <name type="scientific">Psychrobacter sp. (strain PRwf-1)</name>
    <dbReference type="NCBI Taxonomy" id="349106"/>
    <lineage>
        <taxon>Bacteria</taxon>
        <taxon>Pseudomonadati</taxon>
        <taxon>Pseudomonadota</taxon>
        <taxon>Gammaproteobacteria</taxon>
        <taxon>Moraxellales</taxon>
        <taxon>Moraxellaceae</taxon>
        <taxon>Psychrobacter</taxon>
    </lineage>
</organism>
<gene>
    <name evidence="1" type="primary">glnD</name>
    <name type="ordered locus">PsycPRwf_0556</name>
</gene>
<dbReference type="EC" id="2.7.7.59" evidence="1"/>
<dbReference type="EC" id="3.1.4.-" evidence="1"/>
<dbReference type="EMBL" id="CP000713">
    <property type="protein sequence ID" value="ABQ93511.1"/>
    <property type="molecule type" value="Genomic_DNA"/>
</dbReference>
<dbReference type="SMR" id="A5WCX0"/>
<dbReference type="STRING" id="349106.PsycPRwf_0556"/>
<dbReference type="KEGG" id="prw:PsycPRwf_0556"/>
<dbReference type="eggNOG" id="COG2844">
    <property type="taxonomic scope" value="Bacteria"/>
</dbReference>
<dbReference type="HOGENOM" id="CLU_012833_0_0_6"/>
<dbReference type="GO" id="GO:0008773">
    <property type="term" value="F:[protein-PII] uridylyltransferase activity"/>
    <property type="evidence" value="ECO:0007669"/>
    <property type="project" value="UniProtKB-UniRule"/>
</dbReference>
<dbReference type="GO" id="GO:0008081">
    <property type="term" value="F:phosphoric diester hydrolase activity"/>
    <property type="evidence" value="ECO:0007669"/>
    <property type="project" value="UniProtKB-UniRule"/>
</dbReference>
<dbReference type="GO" id="GO:0006808">
    <property type="term" value="P:regulation of nitrogen utilization"/>
    <property type="evidence" value="ECO:0007669"/>
    <property type="project" value="UniProtKB-UniRule"/>
</dbReference>
<dbReference type="CDD" id="cd04899">
    <property type="entry name" value="ACT_ACR-UUR-like_2"/>
    <property type="match status" value="1"/>
</dbReference>
<dbReference type="CDD" id="cd04900">
    <property type="entry name" value="ACT_UUR-like_1"/>
    <property type="match status" value="1"/>
</dbReference>
<dbReference type="CDD" id="cd05401">
    <property type="entry name" value="NT_GlnE_GlnD_like"/>
    <property type="match status" value="1"/>
</dbReference>
<dbReference type="Gene3D" id="1.10.3210.10">
    <property type="entry name" value="Hypothetical protein af1432"/>
    <property type="match status" value="1"/>
</dbReference>
<dbReference type="HAMAP" id="MF_00277">
    <property type="entry name" value="PII_uridylyl_transf"/>
    <property type="match status" value="1"/>
</dbReference>
<dbReference type="InterPro" id="IPR045865">
    <property type="entry name" value="ACT-like_dom_sf"/>
</dbReference>
<dbReference type="InterPro" id="IPR002912">
    <property type="entry name" value="ACT_dom"/>
</dbReference>
<dbReference type="InterPro" id="IPR003607">
    <property type="entry name" value="HD/PDEase_dom"/>
</dbReference>
<dbReference type="InterPro" id="IPR006674">
    <property type="entry name" value="HD_domain"/>
</dbReference>
<dbReference type="InterPro" id="IPR043519">
    <property type="entry name" value="NT_sf"/>
</dbReference>
<dbReference type="InterPro" id="IPR013546">
    <property type="entry name" value="PII_UdlTrfase/GS_AdlTrfase"/>
</dbReference>
<dbReference type="InterPro" id="IPR002934">
    <property type="entry name" value="Polymerase_NTP_transf_dom"/>
</dbReference>
<dbReference type="InterPro" id="IPR010043">
    <property type="entry name" value="UTase/UR"/>
</dbReference>
<dbReference type="NCBIfam" id="TIGR01693">
    <property type="entry name" value="UTase_glnD"/>
    <property type="match status" value="1"/>
</dbReference>
<dbReference type="PANTHER" id="PTHR47320">
    <property type="entry name" value="BIFUNCTIONAL URIDYLYLTRANSFERASE/URIDYLYL-REMOVING ENZYME"/>
    <property type="match status" value="1"/>
</dbReference>
<dbReference type="PANTHER" id="PTHR47320:SF1">
    <property type="entry name" value="BIFUNCTIONAL URIDYLYLTRANSFERASE_URIDYLYL-REMOVING ENZYME"/>
    <property type="match status" value="1"/>
</dbReference>
<dbReference type="Pfam" id="PF08335">
    <property type="entry name" value="GlnD_UR_UTase"/>
    <property type="match status" value="1"/>
</dbReference>
<dbReference type="Pfam" id="PF01966">
    <property type="entry name" value="HD"/>
    <property type="match status" value="1"/>
</dbReference>
<dbReference type="Pfam" id="PF01909">
    <property type="entry name" value="NTP_transf_2"/>
    <property type="match status" value="1"/>
</dbReference>
<dbReference type="PIRSF" id="PIRSF006288">
    <property type="entry name" value="PII_uridyltransf"/>
    <property type="match status" value="1"/>
</dbReference>
<dbReference type="SMART" id="SM00471">
    <property type="entry name" value="HDc"/>
    <property type="match status" value="1"/>
</dbReference>
<dbReference type="SUPFAM" id="SSF55021">
    <property type="entry name" value="ACT-like"/>
    <property type="match status" value="1"/>
</dbReference>
<dbReference type="SUPFAM" id="SSF109604">
    <property type="entry name" value="HD-domain/PDEase-like"/>
    <property type="match status" value="1"/>
</dbReference>
<dbReference type="SUPFAM" id="SSF81301">
    <property type="entry name" value="Nucleotidyltransferase"/>
    <property type="match status" value="1"/>
</dbReference>
<dbReference type="SUPFAM" id="SSF81593">
    <property type="entry name" value="Nucleotidyltransferase substrate binding subunit/domain"/>
    <property type="match status" value="1"/>
</dbReference>
<dbReference type="PROSITE" id="PS51671">
    <property type="entry name" value="ACT"/>
    <property type="match status" value="2"/>
</dbReference>
<dbReference type="PROSITE" id="PS51831">
    <property type="entry name" value="HD"/>
    <property type="match status" value="1"/>
</dbReference>
<comment type="function">
    <text evidence="1">Modifies, by uridylylation and deuridylylation, the PII regulatory proteins (GlnB and homologs), in response to the nitrogen status of the cell that GlnD senses through the glutamine level. Under low glutamine levels, catalyzes the conversion of the PII proteins and UTP to PII-UMP and PPi, while under higher glutamine levels, GlnD hydrolyzes PII-UMP to PII and UMP (deuridylylation). Thus, controls uridylylation state and activity of the PII proteins, and plays an important role in the regulation of nitrogen assimilation and metabolism.</text>
</comment>
<comment type="catalytic activity">
    <reaction evidence="1">
        <text>[protein-PII]-L-tyrosine + UTP = [protein-PII]-uridylyl-L-tyrosine + diphosphate</text>
        <dbReference type="Rhea" id="RHEA:13673"/>
        <dbReference type="Rhea" id="RHEA-COMP:12147"/>
        <dbReference type="Rhea" id="RHEA-COMP:12148"/>
        <dbReference type="ChEBI" id="CHEBI:33019"/>
        <dbReference type="ChEBI" id="CHEBI:46398"/>
        <dbReference type="ChEBI" id="CHEBI:46858"/>
        <dbReference type="ChEBI" id="CHEBI:90602"/>
        <dbReference type="EC" id="2.7.7.59"/>
    </reaction>
</comment>
<comment type="catalytic activity">
    <reaction evidence="1">
        <text>[protein-PII]-uridylyl-L-tyrosine + H2O = [protein-PII]-L-tyrosine + UMP + H(+)</text>
        <dbReference type="Rhea" id="RHEA:48600"/>
        <dbReference type="Rhea" id="RHEA-COMP:12147"/>
        <dbReference type="Rhea" id="RHEA-COMP:12148"/>
        <dbReference type="ChEBI" id="CHEBI:15377"/>
        <dbReference type="ChEBI" id="CHEBI:15378"/>
        <dbReference type="ChEBI" id="CHEBI:46858"/>
        <dbReference type="ChEBI" id="CHEBI:57865"/>
        <dbReference type="ChEBI" id="CHEBI:90602"/>
    </reaction>
</comment>
<comment type="cofactor">
    <cofactor evidence="1">
        <name>Mg(2+)</name>
        <dbReference type="ChEBI" id="CHEBI:18420"/>
    </cofactor>
</comment>
<comment type="activity regulation">
    <text evidence="1">Uridylyltransferase (UTase) activity is inhibited by glutamine, while glutamine activates uridylyl-removing (UR) activity.</text>
</comment>
<comment type="domain">
    <text evidence="1">Has four distinct domains: an N-terminal nucleotidyltransferase (NT) domain responsible for UTase activity, a central HD domain that encodes UR activity, and two C-terminal ACT domains that seem to have a role in glutamine sensing.</text>
</comment>
<comment type="similarity">
    <text evidence="1">Belongs to the GlnD family.</text>
</comment>
<name>GLND_PSYWF</name>
<evidence type="ECO:0000255" key="1">
    <source>
        <dbReference type="HAMAP-Rule" id="MF_00277"/>
    </source>
</evidence>
<evidence type="ECO:0000255" key="2">
    <source>
        <dbReference type="PROSITE-ProRule" id="PRU01175"/>
    </source>
</evidence>
<feature type="chain" id="PRO_1000071929" description="Bifunctional uridylyltransferase/uridylyl-removing enzyme">
    <location>
        <begin position="1"/>
        <end position="899"/>
    </location>
</feature>
<feature type="domain" description="HD" evidence="2">
    <location>
        <begin position="465"/>
        <end position="581"/>
    </location>
</feature>
<feature type="domain" description="ACT 1" evidence="1">
    <location>
        <begin position="719"/>
        <end position="804"/>
    </location>
</feature>
<feature type="domain" description="ACT 2" evidence="1">
    <location>
        <begin position="827"/>
        <end position="899"/>
    </location>
</feature>
<feature type="region of interest" description="Uridylyltransferase">
    <location>
        <begin position="1"/>
        <end position="347"/>
    </location>
</feature>
<feature type="region of interest" description="Uridylyl-removing">
    <location>
        <begin position="348"/>
        <end position="718"/>
    </location>
</feature>
<accession>A5WCX0</accession>
<protein>
    <recommendedName>
        <fullName evidence="1">Bifunctional uridylyltransferase/uridylyl-removing enzyme</fullName>
        <shortName evidence="1">UTase/UR</shortName>
    </recommendedName>
    <alternativeName>
        <fullName evidence="1">Bifunctional [protein-PII] modification enzyme</fullName>
    </alternativeName>
    <alternativeName>
        <fullName evidence="1">Bifunctional nitrogen sensor protein</fullName>
    </alternativeName>
    <domain>
        <recommendedName>
            <fullName evidence="1">[Protein-PII] uridylyltransferase</fullName>
            <shortName evidence="1">PII uridylyltransferase</shortName>
            <shortName evidence="1">UTase</shortName>
            <ecNumber evidence="1">2.7.7.59</ecNumber>
        </recommendedName>
    </domain>
    <domain>
        <recommendedName>
            <fullName evidence="1">[Protein-PII]-UMP uridylyl-removing enzyme</fullName>
            <shortName evidence="1">UR</shortName>
            <ecNumber evidence="1">3.1.4.-</ecNumber>
        </recommendedName>
    </domain>
</protein>
<proteinExistence type="inferred from homology"/>